<feature type="chain" id="PRO_0000083490" description="White collar 2 protein">
    <location>
        <begin position="1"/>
        <end position="530"/>
    </location>
</feature>
<feature type="repeat" description="1">
    <location>
        <begin position="9"/>
        <end position="12"/>
    </location>
</feature>
<feature type="repeat" description="2">
    <location>
        <begin position="21"/>
        <end position="24"/>
    </location>
</feature>
<feature type="repeat" description="3">
    <location>
        <begin position="25"/>
        <end position="28"/>
    </location>
</feature>
<feature type="repeat" description="4">
    <location>
        <begin position="29"/>
        <end position="32"/>
    </location>
</feature>
<feature type="repeat" description="5">
    <location>
        <begin position="33"/>
        <end position="36"/>
    </location>
</feature>
<feature type="repeat" description="6">
    <location>
        <begin position="37"/>
        <end position="40"/>
    </location>
</feature>
<feature type="repeat" description="7">
    <location>
        <begin position="41"/>
        <end position="44"/>
    </location>
</feature>
<feature type="domain" description="PAS" evidence="2">
    <location>
        <begin position="162"/>
        <end position="232"/>
    </location>
</feature>
<feature type="zinc finger region" description="GATA-type" evidence="1">
    <location>
        <begin position="468"/>
        <end position="493"/>
    </location>
</feature>
<feature type="region of interest" description="7 X 4 AA repeats of G-[SAT]-G-M">
    <location>
        <begin position="9"/>
        <end position="44"/>
    </location>
</feature>
<feature type="region of interest" description="Disordered" evidence="3">
    <location>
        <begin position="134"/>
        <end position="158"/>
    </location>
</feature>
<feature type="region of interest" description="Disordered" evidence="3">
    <location>
        <begin position="315"/>
        <end position="343"/>
    </location>
</feature>
<feature type="region of interest" description="Disordered" evidence="3">
    <location>
        <begin position="504"/>
        <end position="530"/>
    </location>
</feature>
<feature type="compositionally biased region" description="Gly residues" evidence="3">
    <location>
        <begin position="144"/>
        <end position="154"/>
    </location>
</feature>
<feature type="mutagenesis site" description="In 234W." evidence="4">
    <original>G</original>
    <variation>S</variation>
    <location>
        <position position="14"/>
    </location>
</feature>
<feature type="mutagenesis site" description="In ER33." evidence="4">
    <original>G</original>
    <variation>E</variation>
    <location>
        <position position="485"/>
    </location>
</feature>
<gene>
    <name type="primary">wc-2</name>
    <name type="ORF">B13C5.120</name>
    <name type="ORF">NCU00902</name>
</gene>
<organism>
    <name type="scientific">Neurospora crassa (strain ATCC 24698 / 74-OR23-1A / CBS 708.71 / DSM 1257 / FGSC 987)</name>
    <dbReference type="NCBI Taxonomy" id="367110"/>
    <lineage>
        <taxon>Eukaryota</taxon>
        <taxon>Fungi</taxon>
        <taxon>Dikarya</taxon>
        <taxon>Ascomycota</taxon>
        <taxon>Pezizomycotina</taxon>
        <taxon>Sordariomycetes</taxon>
        <taxon>Sordariomycetidae</taxon>
        <taxon>Sordariales</taxon>
        <taxon>Sordariaceae</taxon>
        <taxon>Neurospora</taxon>
    </lineage>
</organism>
<accession>P78714</accession>
<accession>Q7RVJ5</accession>
<protein>
    <recommendedName>
        <fullName>White collar 2 protein</fullName>
        <shortName>WC2</shortName>
    </recommendedName>
</protein>
<dbReference type="EMBL" id="Y09119">
    <property type="protein sequence ID" value="CAA70336.1"/>
    <property type="molecule type" value="Genomic_DNA"/>
</dbReference>
<dbReference type="EMBL" id="BX842682">
    <property type="protein sequence ID" value="CAE81996.1"/>
    <property type="molecule type" value="Genomic_DNA"/>
</dbReference>
<dbReference type="EMBL" id="CM002236">
    <property type="protein sequence ID" value="EAA34583.3"/>
    <property type="molecule type" value="Genomic_DNA"/>
</dbReference>
<dbReference type="PIR" id="T46648">
    <property type="entry name" value="T46648"/>
</dbReference>
<dbReference type="RefSeq" id="XP_963819.3">
    <property type="nucleotide sequence ID" value="XM_958726.3"/>
</dbReference>
<dbReference type="SMR" id="P78714"/>
<dbReference type="DIP" id="DIP-1156N"/>
<dbReference type="IntAct" id="P78714">
    <property type="interactions" value="3"/>
</dbReference>
<dbReference type="MINT" id="P78714"/>
<dbReference type="STRING" id="367110.P78714"/>
<dbReference type="PaxDb" id="5141-EFNCRP00000000830"/>
<dbReference type="EnsemblFungi" id="EAA34583">
    <property type="protein sequence ID" value="EAA34583"/>
    <property type="gene ID" value="NCU00902"/>
</dbReference>
<dbReference type="GeneID" id="3879968"/>
<dbReference type="KEGG" id="ncr:NCU00902"/>
<dbReference type="VEuPathDB" id="FungiDB:NCU00902"/>
<dbReference type="HOGENOM" id="CLU_024414_0_0_1"/>
<dbReference type="InParanoid" id="P78714"/>
<dbReference type="OrthoDB" id="2162994at2759"/>
<dbReference type="Proteomes" id="UP000001805">
    <property type="component" value="Chromosome 1, Linkage Group I"/>
</dbReference>
<dbReference type="GO" id="GO:0005634">
    <property type="term" value="C:nucleus"/>
    <property type="evidence" value="ECO:0000318"/>
    <property type="project" value="GO_Central"/>
</dbReference>
<dbReference type="GO" id="GO:0000976">
    <property type="term" value="F:transcription cis-regulatory region binding"/>
    <property type="evidence" value="ECO:0000318"/>
    <property type="project" value="GO_Central"/>
</dbReference>
<dbReference type="GO" id="GO:0008270">
    <property type="term" value="F:zinc ion binding"/>
    <property type="evidence" value="ECO:0007669"/>
    <property type="project" value="UniProtKB-KW"/>
</dbReference>
<dbReference type="GO" id="GO:0006357">
    <property type="term" value="P:regulation of transcription by RNA polymerase II"/>
    <property type="evidence" value="ECO:0000318"/>
    <property type="project" value="GO_Central"/>
</dbReference>
<dbReference type="CDD" id="cd00130">
    <property type="entry name" value="PAS"/>
    <property type="match status" value="1"/>
</dbReference>
<dbReference type="CDD" id="cd00202">
    <property type="entry name" value="ZnF_GATA"/>
    <property type="match status" value="1"/>
</dbReference>
<dbReference type="Gene3D" id="3.30.50.10">
    <property type="entry name" value="Erythroid Transcription Factor GATA-1, subunit A"/>
    <property type="match status" value="1"/>
</dbReference>
<dbReference type="Gene3D" id="3.30.450.20">
    <property type="entry name" value="PAS domain"/>
    <property type="match status" value="1"/>
</dbReference>
<dbReference type="InterPro" id="IPR000014">
    <property type="entry name" value="PAS"/>
</dbReference>
<dbReference type="InterPro" id="IPR035965">
    <property type="entry name" value="PAS-like_dom_sf"/>
</dbReference>
<dbReference type="InterPro" id="IPR013655">
    <property type="entry name" value="PAS_fold_3"/>
</dbReference>
<dbReference type="InterPro" id="IPR000679">
    <property type="entry name" value="Znf_GATA"/>
</dbReference>
<dbReference type="InterPro" id="IPR013088">
    <property type="entry name" value="Znf_NHR/GATA"/>
</dbReference>
<dbReference type="NCBIfam" id="TIGR00229">
    <property type="entry name" value="sensory_box"/>
    <property type="match status" value="1"/>
</dbReference>
<dbReference type="PANTHER" id="PTHR47172:SF24">
    <property type="entry name" value="GATA ZINC FINGER DOMAIN-CONTAINING PROTEIN 14-RELATED"/>
    <property type="match status" value="1"/>
</dbReference>
<dbReference type="PANTHER" id="PTHR47172">
    <property type="entry name" value="OS01G0976800 PROTEIN"/>
    <property type="match status" value="1"/>
</dbReference>
<dbReference type="Pfam" id="PF00320">
    <property type="entry name" value="GATA"/>
    <property type="match status" value="1"/>
</dbReference>
<dbReference type="Pfam" id="PF08447">
    <property type="entry name" value="PAS_3"/>
    <property type="match status" value="1"/>
</dbReference>
<dbReference type="SMART" id="SM00091">
    <property type="entry name" value="PAS"/>
    <property type="match status" value="1"/>
</dbReference>
<dbReference type="SMART" id="SM00401">
    <property type="entry name" value="ZnF_GATA"/>
    <property type="match status" value="1"/>
</dbReference>
<dbReference type="SUPFAM" id="SSF57716">
    <property type="entry name" value="Glucocorticoid receptor-like (DNA-binding domain)"/>
    <property type="match status" value="1"/>
</dbReference>
<dbReference type="SUPFAM" id="SSF55785">
    <property type="entry name" value="PYP-like sensor domain (PAS domain)"/>
    <property type="match status" value="1"/>
</dbReference>
<dbReference type="PROSITE" id="PS00344">
    <property type="entry name" value="GATA_ZN_FINGER_1"/>
    <property type="match status" value="1"/>
</dbReference>
<dbReference type="PROSITE" id="PS50114">
    <property type="entry name" value="GATA_ZN_FINGER_2"/>
    <property type="match status" value="1"/>
</dbReference>
<dbReference type="PROSITE" id="PS50112">
    <property type="entry name" value="PAS"/>
    <property type="match status" value="1"/>
</dbReference>
<keyword id="KW-0010">Activator</keyword>
<keyword id="KW-0238">DNA-binding</keyword>
<keyword id="KW-0479">Metal-binding</keyword>
<keyword id="KW-0539">Nucleus</keyword>
<keyword id="KW-1185">Reference proteome</keyword>
<keyword id="KW-0677">Repeat</keyword>
<keyword id="KW-0804">Transcription</keyword>
<keyword id="KW-0805">Transcription regulation</keyword>
<keyword id="KW-0862">Zinc</keyword>
<keyword id="KW-0863">Zinc-finger</keyword>
<proteinExistence type="evidence at protein level"/>
<sequence length="530" mass="56895">MSHGQPPPGSSMYGFGAMGMGSGMGSGMGSGMGTGMGTGMGTGMSASQMTSDPQDMMSLLDTSVFPGFDGMSMSLDVGDSMSNPFTPVSVPPPLPAGNAGPSHVGVCGGHGAPDQLFSPDDLIATSMSSAGPMIATPTTTTSGPSGGPSSGGGSTLTEFTKRRNWPAKVVEELQDWEHILDANGRIKHVSPSVEPLTGYKPPEIIDLFLRDLIHPDDVGVFTAELNEAIATGSQLRLFYRFRKKDGNWTIFETVGHAHIAAAKFAPNPQNQSPFCQAVFMMARPYPTKNAGLLDSFLEHKIENERLKRRIAELRREEQEEQEESHRTWRMSQEGRSDVTPSDDTATQMGMTPFYIPMNAQADVMMPPPSQPASSLNIALTRENLEGIAGSRPDSIREKMLRYEGNHADTIEMLTGLKYQEGERSHGITTGNASPTLIKGDAGIAIPLDRDPRTGEKKKKIKVAEEYVCTDCGTLDSPEWRKGPSGPKTLCNACGLRWAKKEKKKNANNNNNGGGIGGHNDIHTPMGDHMG</sequence>
<name>WC2_NEUCR</name>
<comment type="function">
    <text evidence="4">May function as a transcription factor involved in light regulation. Binds and affects blue light regulation of the al-3 gene. Wc-1 and wc-2 interact via homologous PAS domains, bind to promoters of light regulated genes such as frq, and activate transcription. May bind directly to frq.</text>
</comment>
<comment type="subunit">
    <text evidence="5">Heterodimer of wc-1 and wc-2 (Potential). Binds to DNA.</text>
</comment>
<comment type="interaction">
    <interactant intactId="EBI-2924174">
        <id>P78714</id>
    </interactant>
    <interactant intactId="EBI-2922603">
        <id>Q01371</id>
        <label>wc-1</label>
    </interactant>
    <organismsDiffer>false</organismsDiffer>
    <experiments>5</experiments>
</comment>
<comment type="subcellular location">
    <subcellularLocation>
        <location>Nucleus</location>
    </subcellularLocation>
</comment>
<comment type="induction">
    <text>By blue light.</text>
</comment>
<reference key="1">
    <citation type="journal article" date="1997" name="EMBO J.">
        <title>White collar 2, a partner in blue-light signal transduction, controlling expression of light-regulated genes in Neurospora crassa.</title>
        <authorList>
            <person name="Linden H."/>
            <person name="Macino G."/>
        </authorList>
    </citation>
    <scope>NUCLEOTIDE SEQUENCE [GENOMIC DNA]</scope>
    <scope>FUNCTION</scope>
    <scope>DNA-BINDING</scope>
    <scope>MUTAGENESIS OF GLY-14 AND GLY-485</scope>
    <source>
        <strain>ATCC 24698 / 74-OR23-1A / CBS 708.71 / DSM 1257 / FGSC 987</strain>
    </source>
</reference>
<reference key="2">
    <citation type="journal article" date="2003" name="Nucleic Acids Res.">
        <title>What's in the genome of a filamentous fungus? Analysis of the Neurospora genome sequence.</title>
        <authorList>
            <person name="Mannhaupt G."/>
            <person name="Montrone C."/>
            <person name="Haase D."/>
            <person name="Mewes H.-W."/>
            <person name="Aign V."/>
            <person name="Hoheisel J.D."/>
            <person name="Fartmann B."/>
            <person name="Nyakatura G."/>
            <person name="Kempken F."/>
            <person name="Maier J."/>
            <person name="Schulte U."/>
        </authorList>
    </citation>
    <scope>NUCLEOTIDE SEQUENCE [LARGE SCALE GENOMIC DNA]</scope>
    <source>
        <strain>ATCC 24698 / 74-OR23-1A / CBS 708.71 / DSM 1257 / FGSC 987</strain>
    </source>
</reference>
<reference key="3">
    <citation type="journal article" date="2003" name="Nature">
        <title>The genome sequence of the filamentous fungus Neurospora crassa.</title>
        <authorList>
            <person name="Galagan J.E."/>
            <person name="Calvo S.E."/>
            <person name="Borkovich K.A."/>
            <person name="Selker E.U."/>
            <person name="Read N.D."/>
            <person name="Jaffe D.B."/>
            <person name="FitzHugh W."/>
            <person name="Ma L.-J."/>
            <person name="Smirnov S."/>
            <person name="Purcell S."/>
            <person name="Rehman B."/>
            <person name="Elkins T."/>
            <person name="Engels R."/>
            <person name="Wang S."/>
            <person name="Nielsen C.B."/>
            <person name="Butler J."/>
            <person name="Endrizzi M."/>
            <person name="Qui D."/>
            <person name="Ianakiev P."/>
            <person name="Bell-Pedersen D."/>
            <person name="Nelson M.A."/>
            <person name="Werner-Washburne M."/>
            <person name="Selitrennikoff C.P."/>
            <person name="Kinsey J.A."/>
            <person name="Braun E.L."/>
            <person name="Zelter A."/>
            <person name="Schulte U."/>
            <person name="Kothe G.O."/>
            <person name="Jedd G."/>
            <person name="Mewes H.-W."/>
            <person name="Staben C."/>
            <person name="Marcotte E."/>
            <person name="Greenberg D."/>
            <person name="Roy A."/>
            <person name="Foley K."/>
            <person name="Naylor J."/>
            <person name="Stange-Thomann N."/>
            <person name="Barrett R."/>
            <person name="Gnerre S."/>
            <person name="Kamal M."/>
            <person name="Kamvysselis M."/>
            <person name="Mauceli E.W."/>
            <person name="Bielke C."/>
            <person name="Rudd S."/>
            <person name="Frishman D."/>
            <person name="Krystofova S."/>
            <person name="Rasmussen C."/>
            <person name="Metzenberg R.L."/>
            <person name="Perkins D.D."/>
            <person name="Kroken S."/>
            <person name="Cogoni C."/>
            <person name="Macino G."/>
            <person name="Catcheside D.E.A."/>
            <person name="Li W."/>
            <person name="Pratt R.J."/>
            <person name="Osmani S.A."/>
            <person name="DeSouza C.P.C."/>
            <person name="Glass N.L."/>
            <person name="Orbach M.J."/>
            <person name="Berglund J.A."/>
            <person name="Voelker R."/>
            <person name="Yarden O."/>
            <person name="Plamann M."/>
            <person name="Seiler S."/>
            <person name="Dunlap J.C."/>
            <person name="Radford A."/>
            <person name="Aramayo R."/>
            <person name="Natvig D.O."/>
            <person name="Alex L.A."/>
            <person name="Mannhaupt G."/>
            <person name="Ebbole D.J."/>
            <person name="Freitag M."/>
            <person name="Paulsen I."/>
            <person name="Sachs M.S."/>
            <person name="Lander E.S."/>
            <person name="Nusbaum C."/>
            <person name="Birren B.W."/>
        </authorList>
    </citation>
    <scope>NUCLEOTIDE SEQUENCE [LARGE SCALE GENOMIC DNA]</scope>
    <source>
        <strain>ATCC 24698 / 74-OR23-1A / CBS 708.71 / DSM 1257 / FGSC 987</strain>
    </source>
</reference>
<evidence type="ECO:0000255" key="1">
    <source>
        <dbReference type="PROSITE-ProRule" id="PRU00094"/>
    </source>
</evidence>
<evidence type="ECO:0000255" key="2">
    <source>
        <dbReference type="PROSITE-ProRule" id="PRU00140"/>
    </source>
</evidence>
<evidence type="ECO:0000256" key="3">
    <source>
        <dbReference type="SAM" id="MobiDB-lite"/>
    </source>
</evidence>
<evidence type="ECO:0000269" key="4">
    <source>
    </source>
</evidence>
<evidence type="ECO:0000305" key="5"/>